<reference key="1">
    <citation type="submission" date="2008-02" db="EMBL/GenBank/DDBJ databases">
        <title>Complete sequence of Haemophilus somnus 2336.</title>
        <authorList>
            <consortium name="US DOE Joint Genome Institute"/>
            <person name="Siddaramappa S."/>
            <person name="Duncan A.J."/>
            <person name="Challacombe J.F."/>
            <person name="Rainey D."/>
            <person name="Gillaspy A.F."/>
            <person name="Carson M."/>
            <person name="Gipson J."/>
            <person name="Gipson M."/>
            <person name="Bruce D."/>
            <person name="Detter J.C."/>
            <person name="Han C.S."/>
            <person name="Land M."/>
            <person name="Tapia R."/>
            <person name="Thompson L.S."/>
            <person name="Orvis J."/>
            <person name="Zaitshik J."/>
            <person name="Barnes G."/>
            <person name="Brettin T.S."/>
            <person name="Dyer D.W."/>
            <person name="Inzana T.J."/>
        </authorList>
    </citation>
    <scope>NUCLEOTIDE SEQUENCE [LARGE SCALE GENOMIC DNA]</scope>
    <source>
        <strain>2336</strain>
    </source>
</reference>
<accession>B0UT70</accession>
<gene>
    <name evidence="1" type="primary">grpE</name>
    <name type="ordered locus">HSM_0989</name>
</gene>
<protein>
    <recommendedName>
        <fullName evidence="1">Protein GrpE</fullName>
    </recommendedName>
    <alternativeName>
        <fullName evidence="1">HSP-70 cofactor</fullName>
    </alternativeName>
</protein>
<feature type="chain" id="PRO_1000085117" description="Protein GrpE">
    <location>
        <begin position="1"/>
        <end position="195"/>
    </location>
</feature>
<feature type="region of interest" description="Disordered" evidence="2">
    <location>
        <begin position="1"/>
        <end position="30"/>
    </location>
</feature>
<feature type="compositionally biased region" description="Acidic residues" evidence="2">
    <location>
        <begin position="10"/>
        <end position="20"/>
    </location>
</feature>
<dbReference type="EMBL" id="CP000947">
    <property type="protein sequence ID" value="ACA32675.1"/>
    <property type="molecule type" value="Genomic_DNA"/>
</dbReference>
<dbReference type="RefSeq" id="WP_011608805.1">
    <property type="nucleotide sequence ID" value="NC_010519.1"/>
</dbReference>
<dbReference type="SMR" id="B0UT70"/>
<dbReference type="STRING" id="228400.HSM_0989"/>
<dbReference type="GeneID" id="31487287"/>
<dbReference type="KEGG" id="hsm:HSM_0989"/>
<dbReference type="HOGENOM" id="CLU_057217_6_0_6"/>
<dbReference type="GO" id="GO:0005829">
    <property type="term" value="C:cytosol"/>
    <property type="evidence" value="ECO:0007669"/>
    <property type="project" value="TreeGrafter"/>
</dbReference>
<dbReference type="GO" id="GO:0000774">
    <property type="term" value="F:adenyl-nucleotide exchange factor activity"/>
    <property type="evidence" value="ECO:0007669"/>
    <property type="project" value="InterPro"/>
</dbReference>
<dbReference type="GO" id="GO:0042803">
    <property type="term" value="F:protein homodimerization activity"/>
    <property type="evidence" value="ECO:0007669"/>
    <property type="project" value="InterPro"/>
</dbReference>
<dbReference type="GO" id="GO:0051087">
    <property type="term" value="F:protein-folding chaperone binding"/>
    <property type="evidence" value="ECO:0007669"/>
    <property type="project" value="InterPro"/>
</dbReference>
<dbReference type="GO" id="GO:0051082">
    <property type="term" value="F:unfolded protein binding"/>
    <property type="evidence" value="ECO:0007669"/>
    <property type="project" value="TreeGrafter"/>
</dbReference>
<dbReference type="GO" id="GO:0006457">
    <property type="term" value="P:protein folding"/>
    <property type="evidence" value="ECO:0007669"/>
    <property type="project" value="InterPro"/>
</dbReference>
<dbReference type="CDD" id="cd00446">
    <property type="entry name" value="GrpE"/>
    <property type="match status" value="1"/>
</dbReference>
<dbReference type="FunFam" id="2.30.22.10:FF:000001">
    <property type="entry name" value="Protein GrpE"/>
    <property type="match status" value="1"/>
</dbReference>
<dbReference type="Gene3D" id="3.90.20.20">
    <property type="match status" value="1"/>
</dbReference>
<dbReference type="Gene3D" id="2.30.22.10">
    <property type="entry name" value="Head domain of nucleotide exchange factor GrpE"/>
    <property type="match status" value="1"/>
</dbReference>
<dbReference type="HAMAP" id="MF_01151">
    <property type="entry name" value="GrpE"/>
    <property type="match status" value="1"/>
</dbReference>
<dbReference type="InterPro" id="IPR000740">
    <property type="entry name" value="GrpE"/>
</dbReference>
<dbReference type="InterPro" id="IPR013805">
    <property type="entry name" value="GrpE_coiled_coil"/>
</dbReference>
<dbReference type="InterPro" id="IPR009012">
    <property type="entry name" value="GrpE_head"/>
</dbReference>
<dbReference type="NCBIfam" id="NF010738">
    <property type="entry name" value="PRK14140.1"/>
    <property type="match status" value="1"/>
</dbReference>
<dbReference type="NCBIfam" id="NF010748">
    <property type="entry name" value="PRK14150.1"/>
    <property type="match status" value="1"/>
</dbReference>
<dbReference type="PANTHER" id="PTHR21237">
    <property type="entry name" value="GRPE PROTEIN"/>
    <property type="match status" value="1"/>
</dbReference>
<dbReference type="PANTHER" id="PTHR21237:SF23">
    <property type="entry name" value="GRPE PROTEIN HOMOLOG, MITOCHONDRIAL"/>
    <property type="match status" value="1"/>
</dbReference>
<dbReference type="Pfam" id="PF01025">
    <property type="entry name" value="GrpE"/>
    <property type="match status" value="1"/>
</dbReference>
<dbReference type="PRINTS" id="PR00773">
    <property type="entry name" value="GRPEPROTEIN"/>
</dbReference>
<dbReference type="SUPFAM" id="SSF58014">
    <property type="entry name" value="Coiled-coil domain of nucleotide exchange factor GrpE"/>
    <property type="match status" value="1"/>
</dbReference>
<dbReference type="SUPFAM" id="SSF51064">
    <property type="entry name" value="Head domain of nucleotide exchange factor GrpE"/>
    <property type="match status" value="1"/>
</dbReference>
<dbReference type="PROSITE" id="PS01071">
    <property type="entry name" value="GRPE"/>
    <property type="match status" value="1"/>
</dbReference>
<sequence>MSEQEKVEQEEISAELETQNEQEKPMEETEIQDGDALENAIARVQELEEQLIQAVKKEQDILLRTRAEIDNIRRRAEQDVEKAHKFALEKFAKDLLETIDNLERALSTPANVENETIKSLVDGVELTLKGLLSTVARFGVEPVGVIGETFNPELHQAISMQPTEGFESNQITVVLQKGYLLNGRVIRPAMVMVAQ</sequence>
<keyword id="KW-0143">Chaperone</keyword>
<keyword id="KW-0963">Cytoplasm</keyword>
<keyword id="KW-0346">Stress response</keyword>
<name>GRPE_HISS2</name>
<comment type="function">
    <text evidence="1">Participates actively in the response to hyperosmotic and heat shock by preventing the aggregation of stress-denatured proteins, in association with DnaK and GrpE. It is the nucleotide exchange factor for DnaK and may function as a thermosensor. Unfolded proteins bind initially to DnaJ; upon interaction with the DnaJ-bound protein, DnaK hydrolyzes its bound ATP, resulting in the formation of a stable complex. GrpE releases ADP from DnaK; ATP binding to DnaK triggers the release of the substrate protein, thus completing the reaction cycle. Several rounds of ATP-dependent interactions between DnaJ, DnaK and GrpE are required for fully efficient folding.</text>
</comment>
<comment type="subunit">
    <text evidence="1">Homodimer.</text>
</comment>
<comment type="subcellular location">
    <subcellularLocation>
        <location evidence="1">Cytoplasm</location>
    </subcellularLocation>
</comment>
<comment type="similarity">
    <text evidence="1">Belongs to the GrpE family.</text>
</comment>
<evidence type="ECO:0000255" key="1">
    <source>
        <dbReference type="HAMAP-Rule" id="MF_01151"/>
    </source>
</evidence>
<evidence type="ECO:0000256" key="2">
    <source>
        <dbReference type="SAM" id="MobiDB-lite"/>
    </source>
</evidence>
<proteinExistence type="inferred from homology"/>
<organism>
    <name type="scientific">Histophilus somni (strain 2336)</name>
    <name type="common">Haemophilus somnus</name>
    <dbReference type="NCBI Taxonomy" id="228400"/>
    <lineage>
        <taxon>Bacteria</taxon>
        <taxon>Pseudomonadati</taxon>
        <taxon>Pseudomonadota</taxon>
        <taxon>Gammaproteobacteria</taxon>
        <taxon>Pasteurellales</taxon>
        <taxon>Pasteurellaceae</taxon>
        <taxon>Histophilus</taxon>
    </lineage>
</organism>